<dbReference type="EMBL" id="CP000903">
    <property type="protein sequence ID" value="ABY45638.1"/>
    <property type="molecule type" value="Genomic_DNA"/>
</dbReference>
<dbReference type="RefSeq" id="WP_002143389.1">
    <property type="nucleotide sequence ID" value="NC_010184.1"/>
</dbReference>
<dbReference type="SMR" id="A9VKG1"/>
<dbReference type="KEGG" id="bwe:BcerKBAB4_4480"/>
<dbReference type="eggNOG" id="COG4477">
    <property type="taxonomic scope" value="Bacteria"/>
</dbReference>
<dbReference type="HOGENOM" id="CLU_034079_1_0_9"/>
<dbReference type="Proteomes" id="UP000002154">
    <property type="component" value="Chromosome"/>
</dbReference>
<dbReference type="GO" id="GO:0005886">
    <property type="term" value="C:plasma membrane"/>
    <property type="evidence" value="ECO:0007669"/>
    <property type="project" value="UniProtKB-SubCell"/>
</dbReference>
<dbReference type="GO" id="GO:0005940">
    <property type="term" value="C:septin ring"/>
    <property type="evidence" value="ECO:0007669"/>
    <property type="project" value="InterPro"/>
</dbReference>
<dbReference type="GO" id="GO:0000917">
    <property type="term" value="P:division septum assembly"/>
    <property type="evidence" value="ECO:0007669"/>
    <property type="project" value="UniProtKB-KW"/>
</dbReference>
<dbReference type="GO" id="GO:0000921">
    <property type="term" value="P:septin ring assembly"/>
    <property type="evidence" value="ECO:0007669"/>
    <property type="project" value="InterPro"/>
</dbReference>
<dbReference type="HAMAP" id="MF_00728">
    <property type="entry name" value="EzrA"/>
    <property type="match status" value="1"/>
</dbReference>
<dbReference type="InterPro" id="IPR010379">
    <property type="entry name" value="EzrA"/>
</dbReference>
<dbReference type="NCBIfam" id="NF003411">
    <property type="entry name" value="PRK04778.1-5"/>
    <property type="match status" value="1"/>
</dbReference>
<dbReference type="NCBIfam" id="NF003413">
    <property type="entry name" value="PRK04778.1-7"/>
    <property type="match status" value="1"/>
</dbReference>
<dbReference type="Pfam" id="PF06160">
    <property type="entry name" value="EzrA"/>
    <property type="match status" value="1"/>
</dbReference>
<evidence type="ECO:0000255" key="1">
    <source>
        <dbReference type="HAMAP-Rule" id="MF_00728"/>
    </source>
</evidence>
<gene>
    <name evidence="1" type="primary">ezrA</name>
    <name type="ordered locus">BcerKBAB4_4480</name>
</gene>
<protein>
    <recommendedName>
        <fullName evidence="1">Septation ring formation regulator EzrA</fullName>
    </recommendedName>
</protein>
<feature type="chain" id="PRO_1000132706" description="Septation ring formation regulator EzrA">
    <location>
        <begin position="1"/>
        <end position="569"/>
    </location>
</feature>
<feature type="topological domain" description="Extracellular" evidence="1">
    <location>
        <begin position="1"/>
        <end position="6"/>
    </location>
</feature>
<feature type="transmembrane region" description="Helical" evidence="1">
    <location>
        <begin position="7"/>
        <end position="25"/>
    </location>
</feature>
<feature type="topological domain" description="Cytoplasmic" evidence="1">
    <location>
        <begin position="26"/>
        <end position="569"/>
    </location>
</feature>
<feature type="coiled-coil region" evidence="1">
    <location>
        <begin position="115"/>
        <end position="150"/>
    </location>
</feature>
<feature type="coiled-coil region" evidence="1">
    <location>
        <begin position="272"/>
        <end position="304"/>
    </location>
</feature>
<feature type="coiled-coil region" evidence="1">
    <location>
        <begin position="383"/>
        <end position="429"/>
    </location>
</feature>
<name>EZRA_BACMK</name>
<organism>
    <name type="scientific">Bacillus mycoides (strain KBAB4)</name>
    <name type="common">Bacillus weihenstephanensis</name>
    <dbReference type="NCBI Taxonomy" id="315730"/>
    <lineage>
        <taxon>Bacteria</taxon>
        <taxon>Bacillati</taxon>
        <taxon>Bacillota</taxon>
        <taxon>Bacilli</taxon>
        <taxon>Bacillales</taxon>
        <taxon>Bacillaceae</taxon>
        <taxon>Bacillus</taxon>
        <taxon>Bacillus cereus group</taxon>
    </lineage>
</organism>
<keyword id="KW-0131">Cell cycle</keyword>
<keyword id="KW-0132">Cell division</keyword>
<keyword id="KW-1003">Cell membrane</keyword>
<keyword id="KW-0175">Coiled coil</keyword>
<keyword id="KW-0472">Membrane</keyword>
<keyword id="KW-0717">Septation</keyword>
<keyword id="KW-0812">Transmembrane</keyword>
<keyword id="KW-1133">Transmembrane helix</keyword>
<reference key="1">
    <citation type="journal article" date="2008" name="Chem. Biol. Interact.">
        <title>Extending the Bacillus cereus group genomics to putative food-borne pathogens of different toxicity.</title>
        <authorList>
            <person name="Lapidus A."/>
            <person name="Goltsman E."/>
            <person name="Auger S."/>
            <person name="Galleron N."/>
            <person name="Segurens B."/>
            <person name="Dossat C."/>
            <person name="Land M.L."/>
            <person name="Broussolle V."/>
            <person name="Brillard J."/>
            <person name="Guinebretiere M.-H."/>
            <person name="Sanchis V."/>
            <person name="Nguen-the C."/>
            <person name="Lereclus D."/>
            <person name="Richardson P."/>
            <person name="Wincker P."/>
            <person name="Weissenbach J."/>
            <person name="Ehrlich S.D."/>
            <person name="Sorokin A."/>
        </authorList>
    </citation>
    <scope>NUCLEOTIDE SEQUENCE [LARGE SCALE GENOMIC DNA]</scope>
    <source>
        <strain>KBAB4</strain>
    </source>
</reference>
<proteinExistence type="inferred from homology"/>
<accession>A9VKG1</accession>
<sequence>MDSILTIVIIVVSSILVLLMIELVIRNRSYKDIEALEQWKQEIKDKPVADELKRVKDLNMTGQTEELFGKWREEWDEIVSTSLPKAEKDLGQARKFASQFSFRKAKHAMKESISGLDDADNRITDILNELQQLLESHEKNSAEIEGLRDTYRSMKKSVLAHRHMYGAAEQKIEEMLDVESEKFKTFEEATDNGDYLKAREIVISLEEGLASLEIVIHQIPDLLVECQATLPVQLEDLLQGHDDMIRQGYVLEYLEIPKEVRDMTTQLHTCLMDIQELHITEAAEKVENLKTRLDSFYDQLEQEVHAKHYVEQKTLSVYEDLEEIRTETIETKIETQLVKQSYQLQDKDIESQKVIEKQMHILMKRFEVLQIRVAEQDIAFSIIREELEEVYEQCETLKVLHAEYKEMLQTMRKEEFEAREKLQEMRNTIFETKRFMQKSNLPGLPESIMEDLQKGQMAMQAVYEQLEVKPLNMNTVNSSLEEAYTVVNGVSEMTEEVIGQAYLVEKLIQYGNRYRSHDENLAESLNYAEKLFREYQYDAALEQAASILEQLEPGVVQKIAEYVDNEQTL</sequence>
<comment type="function">
    <text evidence="1">Negative regulator of FtsZ ring formation; modulates the frequency and position of FtsZ ring formation. Inhibits FtsZ ring formation at polar sites. Interacts either with FtsZ or with one of its binding partners to promote depolymerization.</text>
</comment>
<comment type="subcellular location">
    <subcellularLocation>
        <location evidence="1">Cell membrane</location>
        <topology evidence="1">Single-pass membrane protein</topology>
    </subcellularLocation>
    <text evidence="1">Colocalized with FtsZ to the nascent septal site.</text>
</comment>
<comment type="similarity">
    <text evidence="1">Belongs to the EzrA family.</text>
</comment>